<sequence length="686" mass="77899">MEVVTFGDVAVHFSREEWQCLDPGQRALYREVMLENHSSVAGLAGFLVFKPELISRLEQGEEPWVLDLQGAEGTEAPRTSKTDSTIRTENEQACEDMDILKSESYGTVVRISPQDFPQNPGFGDVSDSEVWLDSHLGSPGLKVTGFTFQNNCLNEETVVPKTFTKDAPQGCKELGSSGLDCQPLESQGESAEGMSQRCEECGKGIRATSDIALHWEINTQKISRCQECQKKLSDCLQGKHTNNCHGEKPYECAECGKVFRLCSQLNQHQRIHTGEKPFKCTECGKAFRLSSKLIQHQRIHTGEKPYRCEECGKAFGQSSSLIHHQRIHTGERPYGCRECGKAFSQQSQLVRHQRTHTGERPYPCKECGKAFSQSSTLAQHQRMHTGEKAQILKASDSPSLVAHQRIHAVEKPFKCDECGKAFRWISRLSQHQLIHTGEKPYKCNKCTKAFGCSSRLIRHQRTHTGEKPFKCDECGKGFVQGSHLIQHQRIHTGEKPYVCNDCGKAFSQSSSLIYHQRIHKGEKPYECLQCGKAFSMSTQLTIHQRVHTGERPYKCNECGKAFSQNSTLFQHQIIHAGVKPYECSECGKAFSRSSYLIEHQRIHTRAQWFYEYGNALEGSIFVSRKKVNTIKKLHQCEDCEKIFRWRSHLIIHQRIHTGEKPYKCNDCGKAFNRSSRLTQHQKIHMG</sequence>
<evidence type="ECO:0000250" key="1">
    <source>
        <dbReference type="UniProtKB" id="P17097"/>
    </source>
</evidence>
<evidence type="ECO:0000255" key="2">
    <source>
        <dbReference type="PROSITE-ProRule" id="PRU00042"/>
    </source>
</evidence>
<evidence type="ECO:0000255" key="3">
    <source>
        <dbReference type="PROSITE-ProRule" id="PRU00119"/>
    </source>
</evidence>
<evidence type="ECO:0000305" key="4"/>
<reference key="1">
    <citation type="submission" date="2004-11" db="EMBL/GenBank/DDBJ databases">
        <authorList>
            <consortium name="The German cDNA consortium"/>
        </authorList>
    </citation>
    <scope>NUCLEOTIDE SEQUENCE [LARGE SCALE MRNA]</scope>
    <source>
        <tissue>Heart</tissue>
    </source>
</reference>
<name>ZNF7_PONAB</name>
<gene>
    <name type="primary">ZNF7</name>
</gene>
<keyword id="KW-0238">DNA-binding</keyword>
<keyword id="KW-1017">Isopeptide bond</keyword>
<keyword id="KW-0479">Metal-binding</keyword>
<keyword id="KW-0539">Nucleus</keyword>
<keyword id="KW-0597">Phosphoprotein</keyword>
<keyword id="KW-1185">Reference proteome</keyword>
<keyword id="KW-0677">Repeat</keyword>
<keyword id="KW-0804">Transcription</keyword>
<keyword id="KW-0805">Transcription regulation</keyword>
<keyword id="KW-0832">Ubl conjugation</keyword>
<keyword id="KW-0862">Zinc</keyword>
<keyword id="KW-0863">Zinc-finger</keyword>
<protein>
    <recommendedName>
        <fullName>Zinc finger protein 7</fullName>
    </recommendedName>
</protein>
<dbReference type="EMBL" id="CR858512">
    <property type="protein sequence ID" value="CAH90740.1"/>
    <property type="molecule type" value="mRNA"/>
</dbReference>
<dbReference type="RefSeq" id="NP_001125413.1">
    <property type="nucleotide sequence ID" value="NM_001131941.1"/>
</dbReference>
<dbReference type="SMR" id="Q5RBX0"/>
<dbReference type="FunCoup" id="Q5RBX0">
    <property type="interactions" value="830"/>
</dbReference>
<dbReference type="GeneID" id="100172320"/>
<dbReference type="KEGG" id="pon:100172320"/>
<dbReference type="CTD" id="7553"/>
<dbReference type="eggNOG" id="KOG1721">
    <property type="taxonomic scope" value="Eukaryota"/>
</dbReference>
<dbReference type="InParanoid" id="Q5RBX0"/>
<dbReference type="OrthoDB" id="9411774at2759"/>
<dbReference type="Proteomes" id="UP000001595">
    <property type="component" value="Unplaced"/>
</dbReference>
<dbReference type="GO" id="GO:0005634">
    <property type="term" value="C:nucleus"/>
    <property type="evidence" value="ECO:0007669"/>
    <property type="project" value="UniProtKB-SubCell"/>
</dbReference>
<dbReference type="GO" id="GO:0000981">
    <property type="term" value="F:DNA-binding transcription factor activity, RNA polymerase II-specific"/>
    <property type="evidence" value="ECO:0007669"/>
    <property type="project" value="TreeGrafter"/>
</dbReference>
<dbReference type="GO" id="GO:0000977">
    <property type="term" value="F:RNA polymerase II transcription regulatory region sequence-specific DNA binding"/>
    <property type="evidence" value="ECO:0007669"/>
    <property type="project" value="TreeGrafter"/>
</dbReference>
<dbReference type="GO" id="GO:0008270">
    <property type="term" value="F:zinc ion binding"/>
    <property type="evidence" value="ECO:0007669"/>
    <property type="project" value="UniProtKB-KW"/>
</dbReference>
<dbReference type="CDD" id="cd07765">
    <property type="entry name" value="KRAB_A-box"/>
    <property type="match status" value="1"/>
</dbReference>
<dbReference type="FunFam" id="3.30.160.60:FF:000824">
    <property type="entry name" value="Zinc finger protein 184"/>
    <property type="match status" value="1"/>
</dbReference>
<dbReference type="FunFam" id="3.30.160.60:FF:000631">
    <property type="entry name" value="zinc finger protein 189 isoform X2"/>
    <property type="match status" value="1"/>
</dbReference>
<dbReference type="FunFam" id="3.30.160.60:FF:002343">
    <property type="entry name" value="Zinc finger protein 33A"/>
    <property type="match status" value="2"/>
</dbReference>
<dbReference type="FunFam" id="3.30.160.60:FF:000016">
    <property type="entry name" value="zinc finger protein 37 homolog"/>
    <property type="match status" value="4"/>
</dbReference>
<dbReference type="FunFam" id="3.30.160.60:FF:002090">
    <property type="entry name" value="Zinc finger protein 473"/>
    <property type="match status" value="1"/>
</dbReference>
<dbReference type="FunFam" id="3.30.160.60:FF:000367">
    <property type="entry name" value="Zinc finger protein 572"/>
    <property type="match status" value="1"/>
</dbReference>
<dbReference type="FunFam" id="3.30.160.60:FF:001027">
    <property type="entry name" value="Zinc finger protein 7"/>
    <property type="match status" value="1"/>
</dbReference>
<dbReference type="FunFam" id="3.30.160.60:FF:002340">
    <property type="entry name" value="Zinc finger protein 7"/>
    <property type="match status" value="1"/>
</dbReference>
<dbReference type="FunFam" id="3.30.160.60:FF:000330">
    <property type="entry name" value="Zinc finger with KRAB and SCAN domains 1"/>
    <property type="match status" value="1"/>
</dbReference>
<dbReference type="FunFam" id="3.30.160.60:FF:000529">
    <property type="entry name" value="Zinc finger with KRAB and SCAN domains 8"/>
    <property type="match status" value="1"/>
</dbReference>
<dbReference type="Gene3D" id="6.10.140.140">
    <property type="match status" value="1"/>
</dbReference>
<dbReference type="Gene3D" id="3.30.160.60">
    <property type="entry name" value="Classic Zinc Finger"/>
    <property type="match status" value="14"/>
</dbReference>
<dbReference type="InterPro" id="IPR001909">
    <property type="entry name" value="KRAB"/>
</dbReference>
<dbReference type="InterPro" id="IPR036051">
    <property type="entry name" value="KRAB_dom_sf"/>
</dbReference>
<dbReference type="InterPro" id="IPR036236">
    <property type="entry name" value="Znf_C2H2_sf"/>
</dbReference>
<dbReference type="InterPro" id="IPR013087">
    <property type="entry name" value="Znf_C2H2_type"/>
</dbReference>
<dbReference type="PANTHER" id="PTHR24381">
    <property type="entry name" value="ZINC FINGER PROTEIN"/>
    <property type="match status" value="1"/>
</dbReference>
<dbReference type="PANTHER" id="PTHR24381:SF390">
    <property type="entry name" value="ZINC FINGER PROTEIN 37 HOMOLOG"/>
    <property type="match status" value="1"/>
</dbReference>
<dbReference type="Pfam" id="PF01352">
    <property type="entry name" value="KRAB"/>
    <property type="match status" value="1"/>
</dbReference>
<dbReference type="Pfam" id="PF00096">
    <property type="entry name" value="zf-C2H2"/>
    <property type="match status" value="12"/>
</dbReference>
<dbReference type="SMART" id="SM00349">
    <property type="entry name" value="KRAB"/>
    <property type="match status" value="1"/>
</dbReference>
<dbReference type="SMART" id="SM00355">
    <property type="entry name" value="ZnF_C2H2"/>
    <property type="match status" value="14"/>
</dbReference>
<dbReference type="SUPFAM" id="SSF57667">
    <property type="entry name" value="beta-beta-alpha zinc fingers"/>
    <property type="match status" value="8"/>
</dbReference>
<dbReference type="SUPFAM" id="SSF109640">
    <property type="entry name" value="KRAB domain (Kruppel-associated box)"/>
    <property type="match status" value="1"/>
</dbReference>
<dbReference type="PROSITE" id="PS50805">
    <property type="entry name" value="KRAB"/>
    <property type="match status" value="1"/>
</dbReference>
<dbReference type="PROSITE" id="PS00028">
    <property type="entry name" value="ZINC_FINGER_C2H2_1"/>
    <property type="match status" value="14"/>
</dbReference>
<dbReference type="PROSITE" id="PS50157">
    <property type="entry name" value="ZINC_FINGER_C2H2_2"/>
    <property type="match status" value="14"/>
</dbReference>
<comment type="function">
    <text>May be involved in transcriptional regulation.</text>
</comment>
<comment type="subcellular location">
    <subcellularLocation>
        <location evidence="4">Nucleus</location>
    </subcellularLocation>
</comment>
<comment type="similarity">
    <text evidence="4">Belongs to the krueppel C2H2-type zinc-finger protein family.</text>
</comment>
<proteinExistence type="evidence at transcript level"/>
<feature type="chain" id="PRO_0000290336" description="Zinc finger protein 7">
    <location>
        <begin position="1"/>
        <end position="686"/>
    </location>
</feature>
<feature type="domain" description="KRAB" evidence="3">
    <location>
        <begin position="4"/>
        <end position="76"/>
    </location>
</feature>
<feature type="zinc finger region" description="C2H2-type 1" evidence="2">
    <location>
        <begin position="223"/>
        <end position="245"/>
    </location>
</feature>
<feature type="zinc finger region" description="C2H2-type 2" evidence="2">
    <location>
        <begin position="250"/>
        <end position="272"/>
    </location>
</feature>
<feature type="zinc finger region" description="C2H2-type 3" evidence="2">
    <location>
        <begin position="278"/>
        <end position="300"/>
    </location>
</feature>
<feature type="zinc finger region" description="C2H2-type 4" evidence="2">
    <location>
        <begin position="306"/>
        <end position="328"/>
    </location>
</feature>
<feature type="zinc finger region" description="C2H2-type 5" evidence="2">
    <location>
        <begin position="334"/>
        <end position="356"/>
    </location>
</feature>
<feature type="zinc finger region" description="C2H2-type 6" evidence="2">
    <location>
        <begin position="362"/>
        <end position="384"/>
    </location>
</feature>
<feature type="zinc finger region" description="C2H2-type 7" evidence="2">
    <location>
        <begin position="413"/>
        <end position="435"/>
    </location>
</feature>
<feature type="zinc finger region" description="C2H2-type 8" evidence="2">
    <location>
        <begin position="441"/>
        <end position="463"/>
    </location>
</feature>
<feature type="zinc finger region" description="C2H2-type 9" evidence="2">
    <location>
        <begin position="469"/>
        <end position="491"/>
    </location>
</feature>
<feature type="zinc finger region" description="C2H2-type 10" evidence="2">
    <location>
        <begin position="497"/>
        <end position="519"/>
    </location>
</feature>
<feature type="zinc finger region" description="C2H2-type 11" evidence="2">
    <location>
        <begin position="525"/>
        <end position="547"/>
    </location>
</feature>
<feature type="zinc finger region" description="C2H2-type 12" evidence="2">
    <location>
        <begin position="553"/>
        <end position="575"/>
    </location>
</feature>
<feature type="zinc finger region" description="C2H2-type 13" evidence="2">
    <location>
        <begin position="581"/>
        <end position="603"/>
    </location>
</feature>
<feature type="zinc finger region" description="C2H2-type 14" evidence="2">
    <location>
        <begin position="634"/>
        <end position="656"/>
    </location>
</feature>
<feature type="zinc finger region" description="C2H2-type 15" evidence="2">
    <location>
        <begin position="662"/>
        <end position="684"/>
    </location>
</feature>
<feature type="modified residue" description="Phosphoserine" evidence="1">
    <location>
        <position position="126"/>
    </location>
</feature>
<feature type="modified residue" description="Phosphoserine" evidence="1">
    <location>
        <position position="138"/>
    </location>
</feature>
<feature type="cross-link" description="Glycyl lysine isopeptide (Lys-Gly) (interchain with G-Cter in SUMO2)" evidence="1">
    <location>
        <position position="81"/>
    </location>
</feature>
<feature type="cross-link" description="Glycyl lysine isopeptide (Lys-Gly) (interchain with G-Cter in SUMO2)" evidence="1">
    <location>
        <position position="101"/>
    </location>
</feature>
<feature type="cross-link" description="Glycyl lysine isopeptide (Lys-Gly) (interchain with G-Cter in SUMO2)" evidence="1">
    <location>
        <position position="279"/>
    </location>
</feature>
<feature type="cross-link" description="Glycyl lysine isopeptide (Lys-Gly) (interchain with G-Cter in SUMO2)" evidence="1">
    <location>
        <position position="292"/>
    </location>
</feature>
<feature type="cross-link" description="Glycyl lysine isopeptide (Lys-Gly) (interchain with G-Cter in SUMO2)" evidence="1">
    <location>
        <position position="393"/>
    </location>
</feature>
<organism>
    <name type="scientific">Pongo abelii</name>
    <name type="common">Sumatran orangutan</name>
    <name type="synonym">Pongo pygmaeus abelii</name>
    <dbReference type="NCBI Taxonomy" id="9601"/>
    <lineage>
        <taxon>Eukaryota</taxon>
        <taxon>Metazoa</taxon>
        <taxon>Chordata</taxon>
        <taxon>Craniata</taxon>
        <taxon>Vertebrata</taxon>
        <taxon>Euteleostomi</taxon>
        <taxon>Mammalia</taxon>
        <taxon>Eutheria</taxon>
        <taxon>Euarchontoglires</taxon>
        <taxon>Primates</taxon>
        <taxon>Haplorrhini</taxon>
        <taxon>Catarrhini</taxon>
        <taxon>Hominidae</taxon>
        <taxon>Pongo</taxon>
    </lineage>
</organism>
<accession>Q5RBX0</accession>